<evidence type="ECO:0000255" key="1">
    <source>
        <dbReference type="HAMAP-Rule" id="MF_00090"/>
    </source>
</evidence>
<accession>A0LL58</accession>
<sequence length="214" mass="23699">MINFQKARDRMVETQLVSRGIHDRRVLEAMRKVPRHLFVDEALKEQAHSDHPLPIGDKQTISQPYIVALMTQSLELQGHEKILEIGTGSGYQAAVLAELAERVFSIERNPNLAYRANQTLQKLGYKNIIVRVADGTLGWPDEAPFDAILVTAGTPKIPQPLLDQLAEGGRLVVPVGDRLAQELVLVESGPEGMKHTNLGGVRFVDLVGKWGWEG</sequence>
<gene>
    <name evidence="1" type="primary">pcm1</name>
    <name type="ordered locus">Sfum_2480</name>
</gene>
<keyword id="KW-0963">Cytoplasm</keyword>
<keyword id="KW-0489">Methyltransferase</keyword>
<keyword id="KW-1185">Reference proteome</keyword>
<keyword id="KW-0949">S-adenosyl-L-methionine</keyword>
<keyword id="KW-0808">Transferase</keyword>
<feature type="chain" id="PRO_0000351944" description="Protein-L-isoaspartate O-methyltransferase 1">
    <location>
        <begin position="1"/>
        <end position="214"/>
    </location>
</feature>
<feature type="active site" evidence="1">
    <location>
        <position position="62"/>
    </location>
</feature>
<dbReference type="EC" id="2.1.1.77" evidence="1"/>
<dbReference type="EMBL" id="CP000478">
    <property type="protein sequence ID" value="ABK18160.1"/>
    <property type="molecule type" value="Genomic_DNA"/>
</dbReference>
<dbReference type="SMR" id="A0LL58"/>
<dbReference type="FunCoup" id="A0LL58">
    <property type="interactions" value="427"/>
</dbReference>
<dbReference type="STRING" id="335543.Sfum_2480"/>
<dbReference type="KEGG" id="sfu:Sfum_2480"/>
<dbReference type="eggNOG" id="COG2518">
    <property type="taxonomic scope" value="Bacteria"/>
</dbReference>
<dbReference type="HOGENOM" id="CLU_055432_2_0_7"/>
<dbReference type="InParanoid" id="A0LL58"/>
<dbReference type="OrthoDB" id="9810066at2"/>
<dbReference type="Proteomes" id="UP000001784">
    <property type="component" value="Chromosome"/>
</dbReference>
<dbReference type="GO" id="GO:0005737">
    <property type="term" value="C:cytoplasm"/>
    <property type="evidence" value="ECO:0007669"/>
    <property type="project" value="UniProtKB-SubCell"/>
</dbReference>
<dbReference type="GO" id="GO:0004719">
    <property type="term" value="F:protein-L-isoaspartate (D-aspartate) O-methyltransferase activity"/>
    <property type="evidence" value="ECO:0007669"/>
    <property type="project" value="UniProtKB-UniRule"/>
</dbReference>
<dbReference type="GO" id="GO:0032259">
    <property type="term" value="P:methylation"/>
    <property type="evidence" value="ECO:0007669"/>
    <property type="project" value="UniProtKB-KW"/>
</dbReference>
<dbReference type="GO" id="GO:0036211">
    <property type="term" value="P:protein modification process"/>
    <property type="evidence" value="ECO:0007669"/>
    <property type="project" value="UniProtKB-UniRule"/>
</dbReference>
<dbReference type="GO" id="GO:0030091">
    <property type="term" value="P:protein repair"/>
    <property type="evidence" value="ECO:0007669"/>
    <property type="project" value="UniProtKB-UniRule"/>
</dbReference>
<dbReference type="CDD" id="cd02440">
    <property type="entry name" value="AdoMet_MTases"/>
    <property type="match status" value="1"/>
</dbReference>
<dbReference type="FunFam" id="3.40.50.150:FF:000010">
    <property type="entry name" value="Protein-L-isoaspartate O-methyltransferase"/>
    <property type="match status" value="1"/>
</dbReference>
<dbReference type="Gene3D" id="3.40.50.150">
    <property type="entry name" value="Vaccinia Virus protein VP39"/>
    <property type="match status" value="1"/>
</dbReference>
<dbReference type="HAMAP" id="MF_00090">
    <property type="entry name" value="PIMT"/>
    <property type="match status" value="1"/>
</dbReference>
<dbReference type="InterPro" id="IPR000682">
    <property type="entry name" value="PCMT"/>
</dbReference>
<dbReference type="InterPro" id="IPR029063">
    <property type="entry name" value="SAM-dependent_MTases_sf"/>
</dbReference>
<dbReference type="NCBIfam" id="TIGR00080">
    <property type="entry name" value="pimt"/>
    <property type="match status" value="1"/>
</dbReference>
<dbReference type="NCBIfam" id="NF001453">
    <property type="entry name" value="PRK00312.1"/>
    <property type="match status" value="1"/>
</dbReference>
<dbReference type="PANTHER" id="PTHR11579">
    <property type="entry name" value="PROTEIN-L-ISOASPARTATE O-METHYLTRANSFERASE"/>
    <property type="match status" value="1"/>
</dbReference>
<dbReference type="PANTHER" id="PTHR11579:SF0">
    <property type="entry name" value="PROTEIN-L-ISOASPARTATE(D-ASPARTATE) O-METHYLTRANSFERASE"/>
    <property type="match status" value="1"/>
</dbReference>
<dbReference type="Pfam" id="PF01135">
    <property type="entry name" value="PCMT"/>
    <property type="match status" value="1"/>
</dbReference>
<dbReference type="SUPFAM" id="SSF53335">
    <property type="entry name" value="S-adenosyl-L-methionine-dependent methyltransferases"/>
    <property type="match status" value="1"/>
</dbReference>
<dbReference type="PROSITE" id="PS01279">
    <property type="entry name" value="PCMT"/>
    <property type="match status" value="1"/>
</dbReference>
<protein>
    <recommendedName>
        <fullName evidence="1">Protein-L-isoaspartate O-methyltransferase 1</fullName>
        <ecNumber evidence="1">2.1.1.77</ecNumber>
    </recommendedName>
    <alternativeName>
        <fullName evidence="1">L-isoaspartyl protein carboxyl methyltransferase 1</fullName>
    </alternativeName>
    <alternativeName>
        <fullName evidence="1">Protein L-isoaspartyl methyltransferase 1</fullName>
    </alternativeName>
    <alternativeName>
        <fullName evidence="1">Protein-beta-aspartate methyltransferase 1</fullName>
        <shortName evidence="1">PIMT 1</shortName>
    </alternativeName>
</protein>
<reference key="1">
    <citation type="submission" date="2006-10" db="EMBL/GenBank/DDBJ databases">
        <title>Complete sequence of Syntrophobacter fumaroxidans MPOB.</title>
        <authorList>
            <consortium name="US DOE Joint Genome Institute"/>
            <person name="Copeland A."/>
            <person name="Lucas S."/>
            <person name="Lapidus A."/>
            <person name="Barry K."/>
            <person name="Detter J.C."/>
            <person name="Glavina del Rio T."/>
            <person name="Hammon N."/>
            <person name="Israni S."/>
            <person name="Pitluck S."/>
            <person name="Goltsman E.G."/>
            <person name="Martinez M."/>
            <person name="Schmutz J."/>
            <person name="Larimer F."/>
            <person name="Land M."/>
            <person name="Hauser L."/>
            <person name="Kyrpides N."/>
            <person name="Kim E."/>
            <person name="Boone D.R."/>
            <person name="Brockman F."/>
            <person name="Culley D."/>
            <person name="Ferry J."/>
            <person name="Gunsalus R."/>
            <person name="McInerney M.J."/>
            <person name="Morrison M."/>
            <person name="Plugge C."/>
            <person name="Rohlin L."/>
            <person name="Scholten J."/>
            <person name="Sieber J."/>
            <person name="Stams A.J.M."/>
            <person name="Worm P."/>
            <person name="Henstra A.M."/>
            <person name="Richardson P."/>
        </authorList>
    </citation>
    <scope>NUCLEOTIDE SEQUENCE [LARGE SCALE GENOMIC DNA]</scope>
    <source>
        <strain>DSM 10017 / MPOB</strain>
    </source>
</reference>
<organism>
    <name type="scientific">Syntrophobacter fumaroxidans (strain DSM 10017 / MPOB)</name>
    <dbReference type="NCBI Taxonomy" id="335543"/>
    <lineage>
        <taxon>Bacteria</taxon>
        <taxon>Pseudomonadati</taxon>
        <taxon>Thermodesulfobacteriota</taxon>
        <taxon>Syntrophobacteria</taxon>
        <taxon>Syntrophobacterales</taxon>
        <taxon>Syntrophobacteraceae</taxon>
        <taxon>Syntrophobacter</taxon>
    </lineage>
</organism>
<name>PIMT1_SYNFM</name>
<proteinExistence type="inferred from homology"/>
<comment type="function">
    <text evidence="1">Catalyzes the methyl esterification of L-isoaspartyl residues in peptides and proteins that result from spontaneous decomposition of normal L-aspartyl and L-asparaginyl residues. It plays a role in the repair and/or degradation of damaged proteins.</text>
</comment>
<comment type="catalytic activity">
    <reaction evidence="1">
        <text>[protein]-L-isoaspartate + S-adenosyl-L-methionine = [protein]-L-isoaspartate alpha-methyl ester + S-adenosyl-L-homocysteine</text>
        <dbReference type="Rhea" id="RHEA:12705"/>
        <dbReference type="Rhea" id="RHEA-COMP:12143"/>
        <dbReference type="Rhea" id="RHEA-COMP:12144"/>
        <dbReference type="ChEBI" id="CHEBI:57856"/>
        <dbReference type="ChEBI" id="CHEBI:59789"/>
        <dbReference type="ChEBI" id="CHEBI:90596"/>
        <dbReference type="ChEBI" id="CHEBI:90598"/>
        <dbReference type="EC" id="2.1.1.77"/>
    </reaction>
</comment>
<comment type="subcellular location">
    <subcellularLocation>
        <location evidence="1">Cytoplasm</location>
    </subcellularLocation>
</comment>
<comment type="similarity">
    <text evidence="1">Belongs to the methyltransferase superfamily. L-isoaspartyl/D-aspartyl protein methyltransferase family.</text>
</comment>